<comment type="function">
    <text evidence="1">Plays an essential role in the initiation and regulation of chromosomal replication. ATP-DnaA binds to the origin of replication (oriC) to initiate formation of the DNA replication initiation complex once per cell cycle. Binds the DnaA box (a 9 base pair repeat at the origin) and separates the double-stranded (ds)DNA. Forms a right-handed helical filament on oriC DNA; dsDNA binds to the exterior of the filament while single-stranded (ss)DNA is stabiized in the filament's interior. The ATP-DnaA-oriC complex binds and stabilizes one strand of the AT-rich DNA unwinding element (DUE), permitting loading of DNA polymerase. After initiation quickly degrades to an ADP-DnaA complex that is not apt for DNA replication. Binds acidic phospholipids.</text>
</comment>
<comment type="subunit">
    <text evidence="1">Oligomerizes as a right-handed, spiral filament on DNA at oriC.</text>
</comment>
<comment type="subcellular location">
    <subcellularLocation>
        <location evidence="1">Cytoplasm</location>
    </subcellularLocation>
</comment>
<comment type="domain">
    <text evidence="1">Domain I is involved in oligomerization and binding regulators, domain II is flexibile and of varying length in different bacteria, domain III forms the AAA+ region, while domain IV binds dsDNA.</text>
</comment>
<comment type="similarity">
    <text evidence="1">Belongs to the DnaA family.</text>
</comment>
<feature type="chain" id="PRO_0000114261" description="Chromosomal replication initiator protein DnaA">
    <location>
        <begin position="1"/>
        <end position="453"/>
    </location>
</feature>
<feature type="region of interest" description="Domain I, interacts with DnaA modulators" evidence="1">
    <location>
        <begin position="1"/>
        <end position="71"/>
    </location>
</feature>
<feature type="region of interest" description="Domain II" evidence="1">
    <location>
        <begin position="71"/>
        <end position="114"/>
    </location>
</feature>
<feature type="region of interest" description="Domain III, AAA+ region" evidence="1">
    <location>
        <begin position="115"/>
        <end position="331"/>
    </location>
</feature>
<feature type="region of interest" description="Domain IV, binds dsDNA" evidence="1">
    <location>
        <begin position="332"/>
        <end position="453"/>
    </location>
</feature>
<feature type="binding site" evidence="1">
    <location>
        <position position="159"/>
    </location>
    <ligand>
        <name>ATP</name>
        <dbReference type="ChEBI" id="CHEBI:30616"/>
    </ligand>
</feature>
<feature type="binding site" evidence="1">
    <location>
        <position position="161"/>
    </location>
    <ligand>
        <name>ATP</name>
        <dbReference type="ChEBI" id="CHEBI:30616"/>
    </ligand>
</feature>
<feature type="binding site" evidence="1">
    <location>
        <position position="162"/>
    </location>
    <ligand>
        <name>ATP</name>
        <dbReference type="ChEBI" id="CHEBI:30616"/>
    </ligand>
</feature>
<feature type="binding site" evidence="1">
    <location>
        <position position="163"/>
    </location>
    <ligand>
        <name>ATP</name>
        <dbReference type="ChEBI" id="CHEBI:30616"/>
    </ligand>
</feature>
<accession>Q6GKU4</accession>
<protein>
    <recommendedName>
        <fullName evidence="1">Chromosomal replication initiator protein DnaA</fullName>
    </recommendedName>
</protein>
<dbReference type="EMBL" id="BX571856">
    <property type="protein sequence ID" value="CAG39029.1"/>
    <property type="molecule type" value="Genomic_DNA"/>
</dbReference>
<dbReference type="RefSeq" id="WP_001290430.1">
    <property type="nucleotide sequence ID" value="NC_002952.2"/>
</dbReference>
<dbReference type="SMR" id="Q6GKU4"/>
<dbReference type="KEGG" id="sar:SAR0001"/>
<dbReference type="HOGENOM" id="CLU_026910_3_1_9"/>
<dbReference type="Proteomes" id="UP000000596">
    <property type="component" value="Chromosome"/>
</dbReference>
<dbReference type="GO" id="GO:0005737">
    <property type="term" value="C:cytoplasm"/>
    <property type="evidence" value="ECO:0007669"/>
    <property type="project" value="UniProtKB-SubCell"/>
</dbReference>
<dbReference type="GO" id="GO:0005886">
    <property type="term" value="C:plasma membrane"/>
    <property type="evidence" value="ECO:0007669"/>
    <property type="project" value="TreeGrafter"/>
</dbReference>
<dbReference type="GO" id="GO:0005524">
    <property type="term" value="F:ATP binding"/>
    <property type="evidence" value="ECO:0007669"/>
    <property type="project" value="UniProtKB-UniRule"/>
</dbReference>
<dbReference type="GO" id="GO:0016887">
    <property type="term" value="F:ATP hydrolysis activity"/>
    <property type="evidence" value="ECO:0007669"/>
    <property type="project" value="InterPro"/>
</dbReference>
<dbReference type="GO" id="GO:0003688">
    <property type="term" value="F:DNA replication origin binding"/>
    <property type="evidence" value="ECO:0007669"/>
    <property type="project" value="UniProtKB-UniRule"/>
</dbReference>
<dbReference type="GO" id="GO:0008289">
    <property type="term" value="F:lipid binding"/>
    <property type="evidence" value="ECO:0007669"/>
    <property type="project" value="UniProtKB-KW"/>
</dbReference>
<dbReference type="GO" id="GO:0006270">
    <property type="term" value="P:DNA replication initiation"/>
    <property type="evidence" value="ECO:0007669"/>
    <property type="project" value="UniProtKB-UniRule"/>
</dbReference>
<dbReference type="GO" id="GO:0006275">
    <property type="term" value="P:regulation of DNA replication"/>
    <property type="evidence" value="ECO:0007669"/>
    <property type="project" value="UniProtKB-UniRule"/>
</dbReference>
<dbReference type="CDD" id="cd00009">
    <property type="entry name" value="AAA"/>
    <property type="match status" value="1"/>
</dbReference>
<dbReference type="CDD" id="cd06571">
    <property type="entry name" value="Bac_DnaA_C"/>
    <property type="match status" value="1"/>
</dbReference>
<dbReference type="FunFam" id="1.10.1750.10:FF:000003">
    <property type="entry name" value="Chromosomal replication initiator protein DnaA"/>
    <property type="match status" value="1"/>
</dbReference>
<dbReference type="FunFam" id="1.10.8.60:FF:000003">
    <property type="entry name" value="Chromosomal replication initiator protein DnaA"/>
    <property type="match status" value="1"/>
</dbReference>
<dbReference type="FunFam" id="3.40.50.300:FF:000150">
    <property type="entry name" value="Chromosomal replication initiator protein DnaA"/>
    <property type="match status" value="1"/>
</dbReference>
<dbReference type="Gene3D" id="1.10.1750.10">
    <property type="match status" value="1"/>
</dbReference>
<dbReference type="Gene3D" id="1.10.8.60">
    <property type="match status" value="1"/>
</dbReference>
<dbReference type="Gene3D" id="3.30.300.180">
    <property type="match status" value="1"/>
</dbReference>
<dbReference type="Gene3D" id="3.40.50.300">
    <property type="entry name" value="P-loop containing nucleotide triphosphate hydrolases"/>
    <property type="match status" value="1"/>
</dbReference>
<dbReference type="HAMAP" id="MF_00377">
    <property type="entry name" value="DnaA_bact"/>
    <property type="match status" value="1"/>
</dbReference>
<dbReference type="InterPro" id="IPR003593">
    <property type="entry name" value="AAA+_ATPase"/>
</dbReference>
<dbReference type="InterPro" id="IPR001957">
    <property type="entry name" value="Chromosome_initiator_DnaA"/>
</dbReference>
<dbReference type="InterPro" id="IPR020591">
    <property type="entry name" value="Chromosome_initiator_DnaA-like"/>
</dbReference>
<dbReference type="InterPro" id="IPR018312">
    <property type="entry name" value="Chromosome_initiator_DnaA_CS"/>
</dbReference>
<dbReference type="InterPro" id="IPR013159">
    <property type="entry name" value="DnaA_C"/>
</dbReference>
<dbReference type="InterPro" id="IPR013317">
    <property type="entry name" value="DnaA_dom"/>
</dbReference>
<dbReference type="InterPro" id="IPR024633">
    <property type="entry name" value="DnaA_N_dom"/>
</dbReference>
<dbReference type="InterPro" id="IPR038454">
    <property type="entry name" value="DnaA_N_sf"/>
</dbReference>
<dbReference type="InterPro" id="IPR027417">
    <property type="entry name" value="P-loop_NTPase"/>
</dbReference>
<dbReference type="InterPro" id="IPR010921">
    <property type="entry name" value="Trp_repressor/repl_initiator"/>
</dbReference>
<dbReference type="NCBIfam" id="TIGR00362">
    <property type="entry name" value="DnaA"/>
    <property type="match status" value="1"/>
</dbReference>
<dbReference type="PANTHER" id="PTHR30050">
    <property type="entry name" value="CHROMOSOMAL REPLICATION INITIATOR PROTEIN DNAA"/>
    <property type="match status" value="1"/>
</dbReference>
<dbReference type="PANTHER" id="PTHR30050:SF2">
    <property type="entry name" value="CHROMOSOMAL REPLICATION INITIATOR PROTEIN DNAA"/>
    <property type="match status" value="1"/>
</dbReference>
<dbReference type="Pfam" id="PF00308">
    <property type="entry name" value="Bac_DnaA"/>
    <property type="match status" value="1"/>
</dbReference>
<dbReference type="Pfam" id="PF08299">
    <property type="entry name" value="Bac_DnaA_C"/>
    <property type="match status" value="1"/>
</dbReference>
<dbReference type="Pfam" id="PF11638">
    <property type="entry name" value="DnaA_N"/>
    <property type="match status" value="1"/>
</dbReference>
<dbReference type="PRINTS" id="PR00051">
    <property type="entry name" value="DNAA"/>
</dbReference>
<dbReference type="SMART" id="SM00382">
    <property type="entry name" value="AAA"/>
    <property type="match status" value="1"/>
</dbReference>
<dbReference type="SMART" id="SM00760">
    <property type="entry name" value="Bac_DnaA_C"/>
    <property type="match status" value="1"/>
</dbReference>
<dbReference type="SUPFAM" id="SSF52540">
    <property type="entry name" value="P-loop containing nucleoside triphosphate hydrolases"/>
    <property type="match status" value="1"/>
</dbReference>
<dbReference type="SUPFAM" id="SSF48295">
    <property type="entry name" value="TrpR-like"/>
    <property type="match status" value="1"/>
</dbReference>
<dbReference type="PROSITE" id="PS01008">
    <property type="entry name" value="DNAA"/>
    <property type="match status" value="1"/>
</dbReference>
<name>DNAA_STAAR</name>
<organism>
    <name type="scientific">Staphylococcus aureus (strain MRSA252)</name>
    <dbReference type="NCBI Taxonomy" id="282458"/>
    <lineage>
        <taxon>Bacteria</taxon>
        <taxon>Bacillati</taxon>
        <taxon>Bacillota</taxon>
        <taxon>Bacilli</taxon>
        <taxon>Bacillales</taxon>
        <taxon>Staphylococcaceae</taxon>
        <taxon>Staphylococcus</taxon>
    </lineage>
</organism>
<gene>
    <name evidence="1" type="primary">dnaA</name>
    <name type="ordered locus">SAR0001</name>
</gene>
<evidence type="ECO:0000255" key="1">
    <source>
        <dbReference type="HAMAP-Rule" id="MF_00377"/>
    </source>
</evidence>
<reference key="1">
    <citation type="journal article" date="2004" name="Proc. Natl. Acad. Sci. U.S.A.">
        <title>Complete genomes of two clinical Staphylococcus aureus strains: evidence for the rapid evolution of virulence and drug resistance.</title>
        <authorList>
            <person name="Holden M.T.G."/>
            <person name="Feil E.J."/>
            <person name="Lindsay J.A."/>
            <person name="Peacock S.J."/>
            <person name="Day N.P.J."/>
            <person name="Enright M.C."/>
            <person name="Foster T.J."/>
            <person name="Moore C.E."/>
            <person name="Hurst L."/>
            <person name="Atkin R."/>
            <person name="Barron A."/>
            <person name="Bason N."/>
            <person name="Bentley S.D."/>
            <person name="Chillingworth C."/>
            <person name="Chillingworth T."/>
            <person name="Churcher C."/>
            <person name="Clark L."/>
            <person name="Corton C."/>
            <person name="Cronin A."/>
            <person name="Doggett J."/>
            <person name="Dowd L."/>
            <person name="Feltwell T."/>
            <person name="Hance Z."/>
            <person name="Harris B."/>
            <person name="Hauser H."/>
            <person name="Holroyd S."/>
            <person name="Jagels K."/>
            <person name="James K.D."/>
            <person name="Lennard N."/>
            <person name="Line A."/>
            <person name="Mayes R."/>
            <person name="Moule S."/>
            <person name="Mungall K."/>
            <person name="Ormond D."/>
            <person name="Quail M.A."/>
            <person name="Rabbinowitsch E."/>
            <person name="Rutherford K.M."/>
            <person name="Sanders M."/>
            <person name="Sharp S."/>
            <person name="Simmonds M."/>
            <person name="Stevens K."/>
            <person name="Whitehead S."/>
            <person name="Barrell B.G."/>
            <person name="Spratt B.G."/>
            <person name="Parkhill J."/>
        </authorList>
    </citation>
    <scope>NUCLEOTIDE SEQUENCE [LARGE SCALE GENOMIC DNA]</scope>
    <source>
        <strain>MRSA252</strain>
    </source>
</reference>
<proteinExistence type="inferred from homology"/>
<sequence>MSEKEIWEKVLEIAQEKLSAVSYSTFLKDTELYTIKDGEAIVLSSIPFNANWLNQQYAEIIQAILFDVVGYEVKPHFITTEELANYSNNETATPKEATKPSTETTEDNHVLGREQFNAHNTFDTFVIGPGNRFPHAASLAVAEAPAKAYNPLFIYGGVGLGKTHLMHAIGHHVLDNNPDAKVIYTSSEKFTNEFIKSIRDNEGEAFRERYRNIDVLLIDDIQFIQNKVQTQEEFFYTFNELHQNNKQIVISSDRPPKEIAQLEDRLRSRFEWGLIVDITPPDYETRMAILQKKIEEEKLDIPPEALNYIANQIQSNIRELEGALTRLLAYSQLLGKPITTELTAEALKDIIQAPKSKKITIQDIQKIVGQYYNVRIEDFSAKKRTKSIAYPRQIAMYLSRELTDFSLPKIGEEFGGRDHTTVIHAHEKISKDLKEDPIFKQEVENLEKEIRNV</sequence>
<keyword id="KW-0067">ATP-binding</keyword>
<keyword id="KW-0963">Cytoplasm</keyword>
<keyword id="KW-0235">DNA replication</keyword>
<keyword id="KW-0238">DNA-binding</keyword>
<keyword id="KW-0446">Lipid-binding</keyword>
<keyword id="KW-0547">Nucleotide-binding</keyword>